<gene>
    <name type="primary">recF</name>
</gene>
<keyword id="KW-0067">ATP-binding</keyword>
<keyword id="KW-0963">Cytoplasm</keyword>
<keyword id="KW-0227">DNA damage</keyword>
<keyword id="KW-0234">DNA repair</keyword>
<keyword id="KW-0235">DNA replication</keyword>
<keyword id="KW-0238">DNA-binding</keyword>
<keyword id="KW-0547">Nucleotide-binding</keyword>
<keyword id="KW-0742">SOS response</keyword>
<evidence type="ECO:0000250" key="1"/>
<evidence type="ECO:0000255" key="2"/>
<evidence type="ECO:0000305" key="3"/>
<reference key="1">
    <citation type="journal article" date="1995" name="Mol. Gen. Genet.">
        <title>Nucleotide sequence of the recF gene cluster from Staphylococcus aureus and complementation analysis in Bacillus subtilis recF mutants.</title>
        <authorList>
            <person name="Alonso J.C."/>
            <person name="Fisher L.M."/>
        </authorList>
    </citation>
    <scope>NUCLEOTIDE SEQUENCE [GENOMIC DNA]</scope>
    <source>
        <strain>YB886</strain>
    </source>
</reference>
<reference key="2">
    <citation type="journal article" date="1992" name="J. Bacteriol.">
        <title>Nucleotide sequence of the Staphylococcus aureus gyrB-gyrA locus encoding the DNA gyrase A and B proteins.</title>
        <authorList>
            <person name="Margerrison E.E.C."/>
            <person name="Hopewell R."/>
            <person name="Fisher L.M."/>
        </authorList>
    </citation>
    <scope>NUCLEOTIDE SEQUENCE [GENOMIC DNA] OF 267-370</scope>
</reference>
<reference key="3">
    <citation type="journal article" date="1993" name="J. Bacteriol.">
        <title>Cloning, sequencing, and expression of the DNA gyrase genes from Staphylococcus aureus.</title>
        <authorList>
            <person name="Brockbank S.M.V."/>
            <person name="Barth P.T."/>
        </authorList>
    </citation>
    <scope>NUCLEOTIDE SEQUENCE [GENOMIC DNA] OF 282-370</scope>
    <source>
        <strain>601055</strain>
    </source>
</reference>
<feature type="chain" id="PRO_0000196461" description="DNA replication and repair protein RecF">
    <location>
        <begin position="1"/>
        <end position="370"/>
    </location>
</feature>
<feature type="binding site" evidence="2">
    <location>
        <begin position="30"/>
        <end position="37"/>
    </location>
    <ligand>
        <name>ATP</name>
        <dbReference type="ChEBI" id="CHEBI:30616"/>
    </ligand>
</feature>
<feature type="sequence conflict" description="In Ref. 2; AAA73950." evidence="3" ref="2">
    <original>EYPILLLD</original>
    <variation>NIPSYYC</variation>
    <location>
        <begin position="309"/>
        <end position="316"/>
    </location>
</feature>
<name>RECF_STAAU</name>
<dbReference type="EMBL" id="M86227">
    <property type="protein sequence ID" value="AAA73950.1"/>
    <property type="molecule type" value="Genomic_DNA"/>
</dbReference>
<dbReference type="EMBL" id="X71437">
    <property type="protein sequence ID" value="CAA50569.1"/>
    <property type="molecule type" value="Genomic_DNA"/>
</dbReference>
<dbReference type="PIR" id="S54710">
    <property type="entry name" value="C40585"/>
</dbReference>
<dbReference type="RefSeq" id="WP_000775113.1">
    <property type="nucleotide sequence ID" value="NZ_WYDB01000001.1"/>
</dbReference>
<dbReference type="SMR" id="P68863"/>
<dbReference type="OMA" id="GESWSYA"/>
<dbReference type="GO" id="GO:0005737">
    <property type="term" value="C:cytoplasm"/>
    <property type="evidence" value="ECO:0007669"/>
    <property type="project" value="UniProtKB-SubCell"/>
</dbReference>
<dbReference type="GO" id="GO:0005524">
    <property type="term" value="F:ATP binding"/>
    <property type="evidence" value="ECO:0007669"/>
    <property type="project" value="UniProtKB-UniRule"/>
</dbReference>
<dbReference type="GO" id="GO:0003697">
    <property type="term" value="F:single-stranded DNA binding"/>
    <property type="evidence" value="ECO:0007669"/>
    <property type="project" value="UniProtKB-UniRule"/>
</dbReference>
<dbReference type="GO" id="GO:0006260">
    <property type="term" value="P:DNA replication"/>
    <property type="evidence" value="ECO:0007669"/>
    <property type="project" value="UniProtKB-UniRule"/>
</dbReference>
<dbReference type="GO" id="GO:0000731">
    <property type="term" value="P:DNA synthesis involved in DNA repair"/>
    <property type="evidence" value="ECO:0007669"/>
    <property type="project" value="TreeGrafter"/>
</dbReference>
<dbReference type="GO" id="GO:0006302">
    <property type="term" value="P:double-strand break repair"/>
    <property type="evidence" value="ECO:0007669"/>
    <property type="project" value="TreeGrafter"/>
</dbReference>
<dbReference type="GO" id="GO:0009432">
    <property type="term" value="P:SOS response"/>
    <property type="evidence" value="ECO:0007669"/>
    <property type="project" value="UniProtKB-UniRule"/>
</dbReference>
<dbReference type="CDD" id="cd03242">
    <property type="entry name" value="ABC_RecF"/>
    <property type="match status" value="1"/>
</dbReference>
<dbReference type="FunFam" id="1.20.1050.90:FF:000002">
    <property type="entry name" value="DNA replication and repair protein RecF"/>
    <property type="match status" value="1"/>
</dbReference>
<dbReference type="Gene3D" id="3.40.50.300">
    <property type="entry name" value="P-loop containing nucleotide triphosphate hydrolases"/>
    <property type="match status" value="1"/>
</dbReference>
<dbReference type="Gene3D" id="1.20.1050.90">
    <property type="entry name" value="RecF/RecN/SMC, N-terminal domain"/>
    <property type="match status" value="1"/>
</dbReference>
<dbReference type="HAMAP" id="MF_00365">
    <property type="entry name" value="RecF"/>
    <property type="match status" value="1"/>
</dbReference>
<dbReference type="InterPro" id="IPR001238">
    <property type="entry name" value="DNA-binding_RecF"/>
</dbReference>
<dbReference type="InterPro" id="IPR018078">
    <property type="entry name" value="DNA-binding_RecF_CS"/>
</dbReference>
<dbReference type="InterPro" id="IPR027417">
    <property type="entry name" value="P-loop_NTPase"/>
</dbReference>
<dbReference type="InterPro" id="IPR003395">
    <property type="entry name" value="RecF/RecN/SMC_N"/>
</dbReference>
<dbReference type="InterPro" id="IPR042174">
    <property type="entry name" value="RecF_2"/>
</dbReference>
<dbReference type="NCBIfam" id="TIGR00611">
    <property type="entry name" value="recf"/>
    <property type="match status" value="1"/>
</dbReference>
<dbReference type="PANTHER" id="PTHR32182">
    <property type="entry name" value="DNA REPLICATION AND REPAIR PROTEIN RECF"/>
    <property type="match status" value="1"/>
</dbReference>
<dbReference type="PANTHER" id="PTHR32182:SF0">
    <property type="entry name" value="DNA REPLICATION AND REPAIR PROTEIN RECF"/>
    <property type="match status" value="1"/>
</dbReference>
<dbReference type="Pfam" id="PF02463">
    <property type="entry name" value="SMC_N"/>
    <property type="match status" value="1"/>
</dbReference>
<dbReference type="SUPFAM" id="SSF52540">
    <property type="entry name" value="P-loop containing nucleoside triphosphate hydrolases"/>
    <property type="match status" value="1"/>
</dbReference>
<dbReference type="PROSITE" id="PS00617">
    <property type="entry name" value="RECF_1"/>
    <property type="match status" value="1"/>
</dbReference>
<dbReference type="PROSITE" id="PS00618">
    <property type="entry name" value="RECF_2"/>
    <property type="match status" value="1"/>
</dbReference>
<sequence length="370" mass="42415">MKLNTLQLENYRNYDEVTLKCHPDVNILIGENAQGKTNLLESIYTLALAKSHRTSNDKELIRFNADYAKIEGELSYRHGTMPLTMFITKKGKQVKVNHLEQSRLTQYIGHLNVVLFAPEDLNIVKGSPQIRRRFIDMELGQISAVYLNDLAQYQRILKQKNNYLKQLQLGQKKDLTMLEVLNQQFAEYAMKVTDKRAHFIQELESLAKPIHAGITNDKEALSLNYLPSLKFDYAQNEAARLEEIMSILSDNMQREKERGISLFGPHRDDISFDVNGMDAQTYGSQGQQRTTALSIKLAEIELMNIEVGEYPILLLDDVLSELDDSRQTHLLSTIQHKVQTFVTTTSVDGIDHEIMNNAKLYRINQGEIIK</sequence>
<accession>P68863</accession>
<accession>P29232</accession>
<protein>
    <recommendedName>
        <fullName>DNA replication and repair protein RecF</fullName>
    </recommendedName>
</protein>
<proteinExistence type="inferred from homology"/>
<organism>
    <name type="scientific">Staphylococcus aureus</name>
    <dbReference type="NCBI Taxonomy" id="1280"/>
    <lineage>
        <taxon>Bacteria</taxon>
        <taxon>Bacillati</taxon>
        <taxon>Bacillota</taxon>
        <taxon>Bacilli</taxon>
        <taxon>Bacillales</taxon>
        <taxon>Staphylococcaceae</taxon>
        <taxon>Staphylococcus</taxon>
    </lineage>
</organism>
<comment type="function">
    <text>The RecF protein is involved in DNA metabolism; it is required for DNA replication and normal SOS inducibility. RecF binds preferentially to single-stranded, linear DNA. It also seems to bind ATP.</text>
</comment>
<comment type="subcellular location">
    <subcellularLocation>
        <location evidence="1">Cytoplasm</location>
    </subcellularLocation>
</comment>
<comment type="similarity">
    <text evidence="3">Belongs to the RecF family.</text>
</comment>